<sequence>MRSSYAGQVSEKLMGQTVTLMGWAHRRRDHGGVIFIDLRDREGLVQIVCDPDRAEMFKTAEGVRNEFCLKIVGLVRARPSGTENANLVSGKVEVLCHELEVLNPSVTPPFQIDDENLSETTRLTHRVLDLRRPQMQKNLMLRYRVSMEVRKFLDANGFIDIETPMLTKSTPEGARDYLVPSRVNDGHFFALPQSPQLFKQLLMVAGFDRYYQITKCFRDEDLRADRQPEFTQIDIETSFLSEEEIRGMFEGMIRTVFRNTIGVDLPGYPVMTYADAMHKYGSDKPDLRVKLQFTELTDVMRDVDFKVFSAPAQSKNGRVVALRVPGGADMSRGEIDGYTEFVKIYGAKGLAWIKVNDVAKGREGMQSPIVKNLHDAAIAEIIARTGVCNGDLIFFGADKAKVVNDAIGALRVKVGHSDFGKKNGLFEDKWAPLWVVDFPMFEHDDEGDRWNAVHHPFTAPKDGHEDYMDTDPGKCIAKAYDMVLNGWELGGGSVRIHKAEVQSKVFSALKIGKEDAQVKFGFLLDALQYGAPPHGGLAFGLDRIVTMMTRAESIRDVIAFPKTQRAQCLLTGAPSLVDEKQLRELHIRLRNAGAAGNA</sequence>
<dbReference type="EC" id="6.1.1.23" evidence="1"/>
<dbReference type="EMBL" id="CP001013">
    <property type="protein sequence ID" value="ACB36267.1"/>
    <property type="molecule type" value="Genomic_DNA"/>
</dbReference>
<dbReference type="RefSeq" id="WP_012349012.1">
    <property type="nucleotide sequence ID" value="NC_010524.1"/>
</dbReference>
<dbReference type="SMR" id="B1XWR8"/>
<dbReference type="STRING" id="395495.Lcho_4013"/>
<dbReference type="KEGG" id="lch:Lcho_4013"/>
<dbReference type="eggNOG" id="COG0173">
    <property type="taxonomic scope" value="Bacteria"/>
</dbReference>
<dbReference type="HOGENOM" id="CLU_014330_3_2_4"/>
<dbReference type="OrthoDB" id="9802326at2"/>
<dbReference type="Proteomes" id="UP000001693">
    <property type="component" value="Chromosome"/>
</dbReference>
<dbReference type="GO" id="GO:0005737">
    <property type="term" value="C:cytoplasm"/>
    <property type="evidence" value="ECO:0007669"/>
    <property type="project" value="UniProtKB-SubCell"/>
</dbReference>
<dbReference type="GO" id="GO:0004815">
    <property type="term" value="F:aspartate-tRNA ligase activity"/>
    <property type="evidence" value="ECO:0007669"/>
    <property type="project" value="UniProtKB-UniRule"/>
</dbReference>
<dbReference type="GO" id="GO:0050560">
    <property type="term" value="F:aspartate-tRNA(Asn) ligase activity"/>
    <property type="evidence" value="ECO:0007669"/>
    <property type="project" value="UniProtKB-EC"/>
</dbReference>
<dbReference type="GO" id="GO:0005524">
    <property type="term" value="F:ATP binding"/>
    <property type="evidence" value="ECO:0007669"/>
    <property type="project" value="UniProtKB-UniRule"/>
</dbReference>
<dbReference type="GO" id="GO:0003676">
    <property type="term" value="F:nucleic acid binding"/>
    <property type="evidence" value="ECO:0007669"/>
    <property type="project" value="InterPro"/>
</dbReference>
<dbReference type="GO" id="GO:0006422">
    <property type="term" value="P:aspartyl-tRNA aminoacylation"/>
    <property type="evidence" value="ECO:0007669"/>
    <property type="project" value="UniProtKB-UniRule"/>
</dbReference>
<dbReference type="CDD" id="cd00777">
    <property type="entry name" value="AspRS_core"/>
    <property type="match status" value="1"/>
</dbReference>
<dbReference type="CDD" id="cd04317">
    <property type="entry name" value="EcAspRS_like_N"/>
    <property type="match status" value="1"/>
</dbReference>
<dbReference type="Gene3D" id="3.30.930.10">
    <property type="entry name" value="Bira Bifunctional Protein, Domain 2"/>
    <property type="match status" value="1"/>
</dbReference>
<dbReference type="Gene3D" id="3.30.1360.30">
    <property type="entry name" value="GAD-like domain"/>
    <property type="match status" value="1"/>
</dbReference>
<dbReference type="Gene3D" id="2.40.50.140">
    <property type="entry name" value="Nucleic acid-binding proteins"/>
    <property type="match status" value="1"/>
</dbReference>
<dbReference type="HAMAP" id="MF_00044">
    <property type="entry name" value="Asp_tRNA_synth_type1"/>
    <property type="match status" value="1"/>
</dbReference>
<dbReference type="InterPro" id="IPR004364">
    <property type="entry name" value="Aa-tRNA-synt_II"/>
</dbReference>
<dbReference type="InterPro" id="IPR006195">
    <property type="entry name" value="aa-tRNA-synth_II"/>
</dbReference>
<dbReference type="InterPro" id="IPR045864">
    <property type="entry name" value="aa-tRNA-synth_II/BPL/LPL"/>
</dbReference>
<dbReference type="InterPro" id="IPR004524">
    <property type="entry name" value="Asp-tRNA-ligase_1"/>
</dbReference>
<dbReference type="InterPro" id="IPR047089">
    <property type="entry name" value="Asp-tRNA-ligase_1_N"/>
</dbReference>
<dbReference type="InterPro" id="IPR002312">
    <property type="entry name" value="Asp/Asn-tRNA-synth_IIb"/>
</dbReference>
<dbReference type="InterPro" id="IPR047090">
    <property type="entry name" value="AspRS_core"/>
</dbReference>
<dbReference type="InterPro" id="IPR004115">
    <property type="entry name" value="GAD-like_sf"/>
</dbReference>
<dbReference type="InterPro" id="IPR029351">
    <property type="entry name" value="GAD_dom"/>
</dbReference>
<dbReference type="InterPro" id="IPR012340">
    <property type="entry name" value="NA-bd_OB-fold"/>
</dbReference>
<dbReference type="InterPro" id="IPR004365">
    <property type="entry name" value="NA-bd_OB_tRNA"/>
</dbReference>
<dbReference type="NCBIfam" id="TIGR00459">
    <property type="entry name" value="aspS_bact"/>
    <property type="match status" value="1"/>
</dbReference>
<dbReference type="NCBIfam" id="NF001750">
    <property type="entry name" value="PRK00476.1"/>
    <property type="match status" value="1"/>
</dbReference>
<dbReference type="PANTHER" id="PTHR22594:SF5">
    <property type="entry name" value="ASPARTATE--TRNA LIGASE, MITOCHONDRIAL"/>
    <property type="match status" value="1"/>
</dbReference>
<dbReference type="PANTHER" id="PTHR22594">
    <property type="entry name" value="ASPARTYL/LYSYL-TRNA SYNTHETASE"/>
    <property type="match status" value="1"/>
</dbReference>
<dbReference type="Pfam" id="PF02938">
    <property type="entry name" value="GAD"/>
    <property type="match status" value="1"/>
</dbReference>
<dbReference type="Pfam" id="PF00152">
    <property type="entry name" value="tRNA-synt_2"/>
    <property type="match status" value="1"/>
</dbReference>
<dbReference type="Pfam" id="PF01336">
    <property type="entry name" value="tRNA_anti-codon"/>
    <property type="match status" value="1"/>
</dbReference>
<dbReference type="PRINTS" id="PR01042">
    <property type="entry name" value="TRNASYNTHASP"/>
</dbReference>
<dbReference type="SUPFAM" id="SSF55681">
    <property type="entry name" value="Class II aaRS and biotin synthetases"/>
    <property type="match status" value="1"/>
</dbReference>
<dbReference type="SUPFAM" id="SSF55261">
    <property type="entry name" value="GAD domain-like"/>
    <property type="match status" value="1"/>
</dbReference>
<dbReference type="SUPFAM" id="SSF50249">
    <property type="entry name" value="Nucleic acid-binding proteins"/>
    <property type="match status" value="1"/>
</dbReference>
<dbReference type="PROSITE" id="PS50862">
    <property type="entry name" value="AA_TRNA_LIGASE_II"/>
    <property type="match status" value="1"/>
</dbReference>
<comment type="function">
    <text evidence="1">Aspartyl-tRNA synthetase with relaxed tRNA specificity since it is able to aspartylate not only its cognate tRNA(Asp) but also tRNA(Asn). Reaction proceeds in two steps: L-aspartate is first activated by ATP to form Asp-AMP and then transferred to the acceptor end of tRNA(Asp/Asn).</text>
</comment>
<comment type="catalytic activity">
    <reaction evidence="1">
        <text>tRNA(Asx) + L-aspartate + ATP = L-aspartyl-tRNA(Asx) + AMP + diphosphate</text>
        <dbReference type="Rhea" id="RHEA:18349"/>
        <dbReference type="Rhea" id="RHEA-COMP:9710"/>
        <dbReference type="Rhea" id="RHEA-COMP:9711"/>
        <dbReference type="ChEBI" id="CHEBI:29991"/>
        <dbReference type="ChEBI" id="CHEBI:30616"/>
        <dbReference type="ChEBI" id="CHEBI:33019"/>
        <dbReference type="ChEBI" id="CHEBI:78442"/>
        <dbReference type="ChEBI" id="CHEBI:78516"/>
        <dbReference type="ChEBI" id="CHEBI:456215"/>
        <dbReference type="EC" id="6.1.1.23"/>
    </reaction>
</comment>
<comment type="subunit">
    <text evidence="1">Homodimer.</text>
</comment>
<comment type="subcellular location">
    <subcellularLocation>
        <location evidence="1">Cytoplasm</location>
    </subcellularLocation>
</comment>
<comment type="similarity">
    <text evidence="1">Belongs to the class-II aminoacyl-tRNA synthetase family. Type 1 subfamily.</text>
</comment>
<reference key="1">
    <citation type="submission" date="2008-03" db="EMBL/GenBank/DDBJ databases">
        <title>Complete sequence of Leptothrix cholodnii SP-6.</title>
        <authorList>
            <consortium name="US DOE Joint Genome Institute"/>
            <person name="Copeland A."/>
            <person name="Lucas S."/>
            <person name="Lapidus A."/>
            <person name="Glavina del Rio T."/>
            <person name="Dalin E."/>
            <person name="Tice H."/>
            <person name="Bruce D."/>
            <person name="Goodwin L."/>
            <person name="Pitluck S."/>
            <person name="Chertkov O."/>
            <person name="Brettin T."/>
            <person name="Detter J.C."/>
            <person name="Han C."/>
            <person name="Kuske C.R."/>
            <person name="Schmutz J."/>
            <person name="Larimer F."/>
            <person name="Land M."/>
            <person name="Hauser L."/>
            <person name="Kyrpides N."/>
            <person name="Lykidis A."/>
            <person name="Emerson D."/>
            <person name="Richardson P."/>
        </authorList>
    </citation>
    <scope>NUCLEOTIDE SEQUENCE [LARGE SCALE GENOMIC DNA]</scope>
    <source>
        <strain>ATCC 51168 / LMG 8142 / SP-6</strain>
    </source>
</reference>
<organism>
    <name type="scientific">Leptothrix cholodnii (strain ATCC 51168 / LMG 8142 / SP-6)</name>
    <name type="common">Leptothrix discophora (strain SP-6)</name>
    <dbReference type="NCBI Taxonomy" id="395495"/>
    <lineage>
        <taxon>Bacteria</taxon>
        <taxon>Pseudomonadati</taxon>
        <taxon>Pseudomonadota</taxon>
        <taxon>Betaproteobacteria</taxon>
        <taxon>Burkholderiales</taxon>
        <taxon>Sphaerotilaceae</taxon>
        <taxon>Leptothrix</taxon>
    </lineage>
</organism>
<name>SYDND_LEPCP</name>
<evidence type="ECO:0000255" key="1">
    <source>
        <dbReference type="HAMAP-Rule" id="MF_00044"/>
    </source>
</evidence>
<accession>B1XWR8</accession>
<proteinExistence type="inferred from homology"/>
<gene>
    <name evidence="1" type="primary">aspS</name>
    <name type="ordered locus">Lcho_4013</name>
</gene>
<keyword id="KW-0030">Aminoacyl-tRNA synthetase</keyword>
<keyword id="KW-0067">ATP-binding</keyword>
<keyword id="KW-0963">Cytoplasm</keyword>
<keyword id="KW-0436">Ligase</keyword>
<keyword id="KW-0547">Nucleotide-binding</keyword>
<keyword id="KW-0648">Protein biosynthesis</keyword>
<keyword id="KW-1185">Reference proteome</keyword>
<feature type="chain" id="PRO_1000091009" description="Aspartate--tRNA(Asp/Asn) ligase">
    <location>
        <begin position="1"/>
        <end position="598"/>
    </location>
</feature>
<feature type="region of interest" description="Aspartate" evidence="1">
    <location>
        <begin position="196"/>
        <end position="199"/>
    </location>
</feature>
<feature type="binding site" evidence="1">
    <location>
        <position position="172"/>
    </location>
    <ligand>
        <name>L-aspartate</name>
        <dbReference type="ChEBI" id="CHEBI:29991"/>
    </ligand>
</feature>
<feature type="binding site" evidence="1">
    <location>
        <begin position="218"/>
        <end position="220"/>
    </location>
    <ligand>
        <name>ATP</name>
        <dbReference type="ChEBI" id="CHEBI:30616"/>
    </ligand>
</feature>
<feature type="binding site" evidence="1">
    <location>
        <position position="218"/>
    </location>
    <ligand>
        <name>L-aspartate</name>
        <dbReference type="ChEBI" id="CHEBI:29991"/>
    </ligand>
</feature>
<feature type="binding site" evidence="1">
    <location>
        <position position="227"/>
    </location>
    <ligand>
        <name>ATP</name>
        <dbReference type="ChEBI" id="CHEBI:30616"/>
    </ligand>
</feature>
<feature type="binding site" evidence="1">
    <location>
        <position position="454"/>
    </location>
    <ligand>
        <name>L-aspartate</name>
        <dbReference type="ChEBI" id="CHEBI:29991"/>
    </ligand>
</feature>
<feature type="binding site" evidence="1">
    <location>
        <position position="488"/>
    </location>
    <ligand>
        <name>ATP</name>
        <dbReference type="ChEBI" id="CHEBI:30616"/>
    </ligand>
</feature>
<feature type="binding site" evidence="1">
    <location>
        <position position="495"/>
    </location>
    <ligand>
        <name>L-aspartate</name>
        <dbReference type="ChEBI" id="CHEBI:29991"/>
    </ligand>
</feature>
<feature type="binding site" evidence="1">
    <location>
        <begin position="540"/>
        <end position="543"/>
    </location>
    <ligand>
        <name>ATP</name>
        <dbReference type="ChEBI" id="CHEBI:30616"/>
    </ligand>
</feature>
<feature type="site" description="Important for tRNA non-discrimination" evidence="1">
    <location>
        <position position="30"/>
    </location>
</feature>
<feature type="site" description="Important for tRNA non-discrimination" evidence="1">
    <location>
        <position position="81"/>
    </location>
</feature>
<protein>
    <recommendedName>
        <fullName evidence="1">Aspartate--tRNA(Asp/Asn) ligase</fullName>
        <ecNumber evidence="1">6.1.1.23</ecNumber>
    </recommendedName>
    <alternativeName>
        <fullName evidence="1">Aspartyl-tRNA synthetase</fullName>
        <shortName evidence="1">AspRS</shortName>
    </alternativeName>
    <alternativeName>
        <fullName evidence="1">Non-discriminating aspartyl-tRNA synthetase</fullName>
        <shortName evidence="1">ND-AspRS</shortName>
    </alternativeName>
</protein>